<keyword id="KW-0025">Alternative splicing</keyword>
<keyword id="KW-1017">Isopeptide bond</keyword>
<keyword id="KW-0597">Phosphoprotein</keyword>
<keyword id="KW-1185">Reference proteome</keyword>
<keyword id="KW-0832">Ubl conjugation</keyword>
<organism>
    <name type="scientific">Mus musculus</name>
    <name type="common">Mouse</name>
    <dbReference type="NCBI Taxonomy" id="10090"/>
    <lineage>
        <taxon>Eukaryota</taxon>
        <taxon>Metazoa</taxon>
        <taxon>Chordata</taxon>
        <taxon>Craniata</taxon>
        <taxon>Vertebrata</taxon>
        <taxon>Euteleostomi</taxon>
        <taxon>Mammalia</taxon>
        <taxon>Eutheria</taxon>
        <taxon>Euarchontoglires</taxon>
        <taxon>Glires</taxon>
        <taxon>Rodentia</taxon>
        <taxon>Myomorpha</taxon>
        <taxon>Muroidea</taxon>
        <taxon>Muridae</taxon>
        <taxon>Murinae</taxon>
        <taxon>Mus</taxon>
        <taxon>Mus</taxon>
    </lineage>
</organism>
<evidence type="ECO:0000250" key="1">
    <source>
        <dbReference type="UniProtKB" id="Q8N7W2"/>
    </source>
</evidence>
<evidence type="ECO:0000255" key="2">
    <source>
        <dbReference type="PROSITE-ProRule" id="PRU00784"/>
    </source>
</evidence>
<evidence type="ECO:0000256" key="3">
    <source>
        <dbReference type="SAM" id="MobiDB-lite"/>
    </source>
</evidence>
<evidence type="ECO:0000303" key="4">
    <source>
    </source>
</evidence>
<evidence type="ECO:0000303" key="5">
    <source>
    </source>
</evidence>
<evidence type="ECO:0000305" key="6"/>
<sequence length="434" mass="48451">MEFSERKRSRKSQSFKLVSRDYHHEVYKISEFSNDVNGETKETQPIYLGDESMEIKKQITGMRRLLNDSTGRIYQRVGKEGEKLKQEPQVVDLVWPQRSNSSTEASQGLHSNSRGAWNELPTQSGQFSGQSGPRSRTFQTQPHISASSNGELPGVNSIVGSNCCTCNCQSTLQAILQELKTMRKLMQFQAVGTQNRQQPPISLMCSQRTAVSRKRNKKKKVLPKTVQPVTAVEPKPSPLETEKKPAASATRPPGLQAAERTSTEENHVLGFGIVLESPSSDPEVQLAEGFDVFMPKSQLDSILSNYTRSGSLLFRKLVCAFFDDKTLANSLPNGKRKRGFNDNRKGLDQNIVGAIKVFTENYCTANHVDKLPGPRDWVQILQDQIKLARRRLKRGSAEVADGDERLDRISLPPTGHTFVIKRETPEDPEPGSVA</sequence>
<protein>
    <recommendedName>
        <fullName>BEN domain-containing protein 7</fullName>
    </recommendedName>
</protein>
<name>BEND7_MOUSE</name>
<feature type="chain" id="PRO_0000244081" description="BEN domain-containing protein 7">
    <location>
        <begin position="1"/>
        <end position="434"/>
    </location>
</feature>
<feature type="domain" description="BEN" evidence="2">
    <location>
        <begin position="289"/>
        <end position="399"/>
    </location>
</feature>
<feature type="region of interest" description="Disordered" evidence="3">
    <location>
        <begin position="96"/>
        <end position="151"/>
    </location>
</feature>
<feature type="region of interest" description="Disordered" evidence="3">
    <location>
        <begin position="212"/>
        <end position="262"/>
    </location>
</feature>
<feature type="region of interest" description="Disordered" evidence="3">
    <location>
        <begin position="414"/>
        <end position="434"/>
    </location>
</feature>
<feature type="compositionally biased region" description="Polar residues" evidence="3">
    <location>
        <begin position="97"/>
        <end position="150"/>
    </location>
</feature>
<feature type="compositionally biased region" description="Basic residues" evidence="3">
    <location>
        <begin position="212"/>
        <end position="222"/>
    </location>
</feature>
<feature type="modified residue" description="Phosphothreonine" evidence="1">
    <location>
        <position position="326"/>
    </location>
</feature>
<feature type="modified residue" description="Phosphoserine" evidence="1">
    <location>
        <position position="330"/>
    </location>
</feature>
<feature type="cross-link" description="Glycyl lysine isopeptide (Lys-Gly) (interchain with G-Cter in SUMO2)" evidence="1">
    <location>
        <position position="16"/>
    </location>
</feature>
<feature type="cross-link" description="Glycyl lysine isopeptide (Lys-Gly) (interchain with G-Cter in SUMO2)" evidence="1">
    <location>
        <position position="56"/>
    </location>
</feature>
<feature type="cross-link" description="Glycyl lysine isopeptide (Lys-Gly) (interchain with G-Cter in SUMO2)" evidence="1">
    <location>
        <position position="85"/>
    </location>
</feature>
<feature type="cross-link" description="Glycyl lysine isopeptide (Lys-Gly) (interchain with G-Cter in SUMO2)" evidence="1">
    <location>
        <position position="244"/>
    </location>
</feature>
<feature type="splice variant" id="VSP_019509" description="In isoform 2." evidence="6">
    <original>AEVADGDERLDRISLPPTGHTFVIKRETPEDPEPGSVA</original>
    <variation>GMNK</variation>
    <location>
        <begin position="397"/>
        <end position="434"/>
    </location>
</feature>
<feature type="splice variant" id="VSP_019510" description="In isoform 3." evidence="4 5">
    <location>
        <position position="397"/>
    </location>
</feature>
<feature type="sequence conflict" description="In Ref. 1; BAC35579." evidence="6" ref="1">
    <original>D</original>
    <variation>H</variation>
    <location>
        <position position="50"/>
    </location>
</feature>
<gene>
    <name type="primary">Bend7</name>
</gene>
<reference key="1">
    <citation type="journal article" date="2005" name="Science">
        <title>The transcriptional landscape of the mammalian genome.</title>
        <authorList>
            <person name="Carninci P."/>
            <person name="Kasukawa T."/>
            <person name="Katayama S."/>
            <person name="Gough J."/>
            <person name="Frith M.C."/>
            <person name="Maeda N."/>
            <person name="Oyama R."/>
            <person name="Ravasi T."/>
            <person name="Lenhard B."/>
            <person name="Wells C."/>
            <person name="Kodzius R."/>
            <person name="Shimokawa K."/>
            <person name="Bajic V.B."/>
            <person name="Brenner S.E."/>
            <person name="Batalov S."/>
            <person name="Forrest A.R."/>
            <person name="Zavolan M."/>
            <person name="Davis M.J."/>
            <person name="Wilming L.G."/>
            <person name="Aidinis V."/>
            <person name="Allen J.E."/>
            <person name="Ambesi-Impiombato A."/>
            <person name="Apweiler R."/>
            <person name="Aturaliya R.N."/>
            <person name="Bailey T.L."/>
            <person name="Bansal M."/>
            <person name="Baxter L."/>
            <person name="Beisel K.W."/>
            <person name="Bersano T."/>
            <person name="Bono H."/>
            <person name="Chalk A.M."/>
            <person name="Chiu K.P."/>
            <person name="Choudhary V."/>
            <person name="Christoffels A."/>
            <person name="Clutterbuck D.R."/>
            <person name="Crowe M.L."/>
            <person name="Dalla E."/>
            <person name="Dalrymple B.P."/>
            <person name="de Bono B."/>
            <person name="Della Gatta G."/>
            <person name="di Bernardo D."/>
            <person name="Down T."/>
            <person name="Engstrom P."/>
            <person name="Fagiolini M."/>
            <person name="Faulkner G."/>
            <person name="Fletcher C.F."/>
            <person name="Fukushima T."/>
            <person name="Furuno M."/>
            <person name="Futaki S."/>
            <person name="Gariboldi M."/>
            <person name="Georgii-Hemming P."/>
            <person name="Gingeras T.R."/>
            <person name="Gojobori T."/>
            <person name="Green R.E."/>
            <person name="Gustincich S."/>
            <person name="Harbers M."/>
            <person name="Hayashi Y."/>
            <person name="Hensch T.K."/>
            <person name="Hirokawa N."/>
            <person name="Hill D."/>
            <person name="Huminiecki L."/>
            <person name="Iacono M."/>
            <person name="Ikeo K."/>
            <person name="Iwama A."/>
            <person name="Ishikawa T."/>
            <person name="Jakt M."/>
            <person name="Kanapin A."/>
            <person name="Katoh M."/>
            <person name="Kawasawa Y."/>
            <person name="Kelso J."/>
            <person name="Kitamura H."/>
            <person name="Kitano H."/>
            <person name="Kollias G."/>
            <person name="Krishnan S.P."/>
            <person name="Kruger A."/>
            <person name="Kummerfeld S.K."/>
            <person name="Kurochkin I.V."/>
            <person name="Lareau L.F."/>
            <person name="Lazarevic D."/>
            <person name="Lipovich L."/>
            <person name="Liu J."/>
            <person name="Liuni S."/>
            <person name="McWilliam S."/>
            <person name="Madan Babu M."/>
            <person name="Madera M."/>
            <person name="Marchionni L."/>
            <person name="Matsuda H."/>
            <person name="Matsuzawa S."/>
            <person name="Miki H."/>
            <person name="Mignone F."/>
            <person name="Miyake S."/>
            <person name="Morris K."/>
            <person name="Mottagui-Tabar S."/>
            <person name="Mulder N."/>
            <person name="Nakano N."/>
            <person name="Nakauchi H."/>
            <person name="Ng P."/>
            <person name="Nilsson R."/>
            <person name="Nishiguchi S."/>
            <person name="Nishikawa S."/>
            <person name="Nori F."/>
            <person name="Ohara O."/>
            <person name="Okazaki Y."/>
            <person name="Orlando V."/>
            <person name="Pang K.C."/>
            <person name="Pavan W.J."/>
            <person name="Pavesi G."/>
            <person name="Pesole G."/>
            <person name="Petrovsky N."/>
            <person name="Piazza S."/>
            <person name="Reed J."/>
            <person name="Reid J.F."/>
            <person name="Ring B.Z."/>
            <person name="Ringwald M."/>
            <person name="Rost B."/>
            <person name="Ruan Y."/>
            <person name="Salzberg S.L."/>
            <person name="Sandelin A."/>
            <person name="Schneider C."/>
            <person name="Schoenbach C."/>
            <person name="Sekiguchi K."/>
            <person name="Semple C.A."/>
            <person name="Seno S."/>
            <person name="Sessa L."/>
            <person name="Sheng Y."/>
            <person name="Shibata Y."/>
            <person name="Shimada H."/>
            <person name="Shimada K."/>
            <person name="Silva D."/>
            <person name="Sinclair B."/>
            <person name="Sperling S."/>
            <person name="Stupka E."/>
            <person name="Sugiura K."/>
            <person name="Sultana R."/>
            <person name="Takenaka Y."/>
            <person name="Taki K."/>
            <person name="Tammoja K."/>
            <person name="Tan S.L."/>
            <person name="Tang S."/>
            <person name="Taylor M.S."/>
            <person name="Tegner J."/>
            <person name="Teichmann S.A."/>
            <person name="Ueda H.R."/>
            <person name="van Nimwegen E."/>
            <person name="Verardo R."/>
            <person name="Wei C.L."/>
            <person name="Yagi K."/>
            <person name="Yamanishi H."/>
            <person name="Zabarovsky E."/>
            <person name="Zhu S."/>
            <person name="Zimmer A."/>
            <person name="Hide W."/>
            <person name="Bult C."/>
            <person name="Grimmond S.M."/>
            <person name="Teasdale R.D."/>
            <person name="Liu E.T."/>
            <person name="Brusic V."/>
            <person name="Quackenbush J."/>
            <person name="Wahlestedt C."/>
            <person name="Mattick J.S."/>
            <person name="Hume D.A."/>
            <person name="Kai C."/>
            <person name="Sasaki D."/>
            <person name="Tomaru Y."/>
            <person name="Fukuda S."/>
            <person name="Kanamori-Katayama M."/>
            <person name="Suzuki M."/>
            <person name="Aoki J."/>
            <person name="Arakawa T."/>
            <person name="Iida J."/>
            <person name="Imamura K."/>
            <person name="Itoh M."/>
            <person name="Kato T."/>
            <person name="Kawaji H."/>
            <person name="Kawagashira N."/>
            <person name="Kawashima T."/>
            <person name="Kojima M."/>
            <person name="Kondo S."/>
            <person name="Konno H."/>
            <person name="Nakano K."/>
            <person name="Ninomiya N."/>
            <person name="Nishio T."/>
            <person name="Okada M."/>
            <person name="Plessy C."/>
            <person name="Shibata K."/>
            <person name="Shiraki T."/>
            <person name="Suzuki S."/>
            <person name="Tagami M."/>
            <person name="Waki K."/>
            <person name="Watahiki A."/>
            <person name="Okamura-Oho Y."/>
            <person name="Suzuki H."/>
            <person name="Kawai J."/>
            <person name="Hayashizaki Y."/>
        </authorList>
    </citation>
    <scope>NUCLEOTIDE SEQUENCE [LARGE SCALE MRNA] (ISOFORMS 1 AND 3)</scope>
    <source>
        <strain>C57BL/6J</strain>
        <tissue>Cerebellum</tissue>
        <tissue>Eye</tissue>
        <tissue>Pituitary anterior lobe</tissue>
    </source>
</reference>
<reference key="2">
    <citation type="journal article" date="2004" name="Genome Res.">
        <title>The status, quality, and expansion of the NIH full-length cDNA project: the Mammalian Gene Collection (MGC).</title>
        <authorList>
            <consortium name="The MGC Project Team"/>
        </authorList>
    </citation>
    <scope>NUCLEOTIDE SEQUENCE [LARGE SCALE MRNA] (ISOFORMS 1 AND 3)</scope>
    <source>
        <strain>FVB/N</strain>
        <tissue>Brain</tissue>
        <tissue>Kidney</tissue>
    </source>
</reference>
<comment type="alternative products">
    <event type="alternative splicing"/>
    <isoform>
        <id>Q8BSV3-1</id>
        <name>1</name>
        <sequence type="displayed"/>
    </isoform>
    <isoform>
        <id>Q8BSV3-2</id>
        <name>2</name>
        <sequence type="described" ref="VSP_019509"/>
    </isoform>
    <isoform>
        <id>Q8BSV3-3</id>
        <name>3</name>
        <sequence type="described" ref="VSP_019510"/>
    </isoform>
</comment>
<comment type="sequence caution" evidence="6">
    <conflict type="frameshift">
        <sequence resource="EMBL-CDS" id="AAH56476"/>
    </conflict>
</comment>
<accession>Q8BSV3</accession>
<accession>Q4VAD9</accession>
<accession>Q6PHN3</accession>
<accession>Q8BPJ4</accession>
<accession>Q8C973</accession>
<dbReference type="EMBL" id="AK030428">
    <property type="protein sequence ID" value="BAC26959.1"/>
    <property type="molecule type" value="mRNA"/>
</dbReference>
<dbReference type="EMBL" id="AK042822">
    <property type="protein sequence ID" value="BAC31373.1"/>
    <property type="molecule type" value="mRNA"/>
</dbReference>
<dbReference type="EMBL" id="AK053896">
    <property type="protein sequence ID" value="BAC35579.1"/>
    <property type="molecule type" value="mRNA"/>
</dbReference>
<dbReference type="EMBL" id="BC056476">
    <property type="protein sequence ID" value="AAH56476.1"/>
    <property type="status" value="ALT_FRAME"/>
    <property type="molecule type" value="mRNA"/>
</dbReference>
<dbReference type="EMBL" id="BC096430">
    <property type="protein sequence ID" value="AAH96430.1"/>
    <property type="molecule type" value="mRNA"/>
</dbReference>
<dbReference type="CCDS" id="CCDS15658.1">
    <molecule id="Q8BSV3-1"/>
</dbReference>
<dbReference type="CCDS" id="CCDS70974.1">
    <molecule id="Q8BSV3-3"/>
</dbReference>
<dbReference type="RefSeq" id="NP_001177329.1">
    <molecule id="Q8BSV3-3"/>
    <property type="nucleotide sequence ID" value="NM_001190400.1"/>
</dbReference>
<dbReference type="RefSeq" id="NP_848778.1">
    <molecule id="Q8BSV3-1"/>
    <property type="nucleotide sequence ID" value="NM_178663.4"/>
</dbReference>
<dbReference type="SMR" id="Q8BSV3"/>
<dbReference type="FunCoup" id="Q8BSV3">
    <property type="interactions" value="138"/>
</dbReference>
<dbReference type="STRING" id="10090.ENSMUSP00000052458"/>
<dbReference type="iPTMnet" id="Q8BSV3"/>
<dbReference type="PhosphoSitePlus" id="Q8BSV3"/>
<dbReference type="PaxDb" id="10090-ENSMUSP00000052458"/>
<dbReference type="ProteomicsDB" id="273668">
    <molecule id="Q8BSV3-1"/>
</dbReference>
<dbReference type="ProteomicsDB" id="273669">
    <molecule id="Q8BSV3-2"/>
</dbReference>
<dbReference type="ProteomicsDB" id="273670">
    <molecule id="Q8BSV3-3"/>
</dbReference>
<dbReference type="Ensembl" id="ENSMUST00000056914.7">
    <molecule id="Q8BSV3-1"/>
    <property type="protein sequence ID" value="ENSMUSP00000052458.7"/>
    <property type="gene ID" value="ENSMUSG00000048186.15"/>
</dbReference>
<dbReference type="Ensembl" id="ENSMUST00000184139.8">
    <molecule id="Q8BSV3-3"/>
    <property type="protein sequence ID" value="ENSMUSP00000139220.2"/>
    <property type="gene ID" value="ENSMUSG00000048186.15"/>
</dbReference>
<dbReference type="GeneID" id="209645"/>
<dbReference type="KEGG" id="mmu:209645"/>
<dbReference type="UCSC" id="uc008iez.2">
    <molecule id="Q8BSV3-1"/>
    <property type="organism name" value="mouse"/>
</dbReference>
<dbReference type="UCSC" id="uc008ifa.2">
    <molecule id="Q8BSV3-3"/>
    <property type="organism name" value="mouse"/>
</dbReference>
<dbReference type="AGR" id="MGI:2443100"/>
<dbReference type="CTD" id="222389"/>
<dbReference type="MGI" id="MGI:2443100">
    <property type="gene designation" value="Bend7"/>
</dbReference>
<dbReference type="VEuPathDB" id="HostDB:ENSMUSG00000048186"/>
<dbReference type="eggNOG" id="ENOG502QQVD">
    <property type="taxonomic scope" value="Eukaryota"/>
</dbReference>
<dbReference type="GeneTree" id="ENSGT00940000163804"/>
<dbReference type="InParanoid" id="Q8BSV3"/>
<dbReference type="OMA" id="CAFFNDV"/>
<dbReference type="OrthoDB" id="9944532at2759"/>
<dbReference type="PhylomeDB" id="Q8BSV3"/>
<dbReference type="TreeFam" id="TF332993"/>
<dbReference type="BioGRID-ORCS" id="209645">
    <property type="hits" value="0 hits in 76 CRISPR screens"/>
</dbReference>
<dbReference type="ChiTaRS" id="Bend7">
    <property type="organism name" value="mouse"/>
</dbReference>
<dbReference type="PRO" id="PR:Q8BSV3"/>
<dbReference type="Proteomes" id="UP000000589">
    <property type="component" value="Chromosome 2"/>
</dbReference>
<dbReference type="RNAct" id="Q8BSV3">
    <property type="molecule type" value="protein"/>
</dbReference>
<dbReference type="Bgee" id="ENSMUSG00000048186">
    <property type="expression patterns" value="Expressed in lumbar subsegment of spinal cord and 68 other cell types or tissues"/>
</dbReference>
<dbReference type="ExpressionAtlas" id="Q8BSV3">
    <property type="expression patterns" value="baseline and differential"/>
</dbReference>
<dbReference type="GO" id="GO:0003677">
    <property type="term" value="F:DNA binding"/>
    <property type="evidence" value="ECO:0007669"/>
    <property type="project" value="InterPro"/>
</dbReference>
<dbReference type="Gene3D" id="1.10.10.2590">
    <property type="entry name" value="BEN domain"/>
    <property type="match status" value="1"/>
</dbReference>
<dbReference type="InterPro" id="IPR018379">
    <property type="entry name" value="BEN_domain"/>
</dbReference>
<dbReference type="InterPro" id="IPR053072">
    <property type="entry name" value="BEN_domain_protein_7"/>
</dbReference>
<dbReference type="PANTHER" id="PTHR35068">
    <property type="entry name" value="BEN DOMAIN-CONTAINING PROTEIN 7"/>
    <property type="match status" value="1"/>
</dbReference>
<dbReference type="PANTHER" id="PTHR35068:SF1">
    <property type="entry name" value="BEN DOMAIN-CONTAINING PROTEIN 7"/>
    <property type="match status" value="1"/>
</dbReference>
<dbReference type="Pfam" id="PF10523">
    <property type="entry name" value="BEN"/>
    <property type="match status" value="1"/>
</dbReference>
<dbReference type="SMART" id="SM01025">
    <property type="entry name" value="BEN"/>
    <property type="match status" value="1"/>
</dbReference>
<dbReference type="PROSITE" id="PS51457">
    <property type="entry name" value="BEN"/>
    <property type="match status" value="1"/>
</dbReference>
<proteinExistence type="evidence at transcript level"/>